<protein>
    <recommendedName>
        <fullName evidence="1">Proline--tRNA ligase</fullName>
        <ecNumber evidence="1">6.1.1.15</ecNumber>
    </recommendedName>
    <alternativeName>
        <fullName evidence="1">Prolyl-tRNA synthetase</fullName>
        <shortName evidence="1">ProRS</shortName>
    </alternativeName>
</protein>
<dbReference type="EC" id="6.1.1.15" evidence="1"/>
<dbReference type="EMBL" id="CP001034">
    <property type="protein sequence ID" value="ACB84031.1"/>
    <property type="molecule type" value="Genomic_DNA"/>
</dbReference>
<dbReference type="RefSeq" id="WP_012446918.1">
    <property type="nucleotide sequence ID" value="NC_010718.1"/>
</dbReference>
<dbReference type="SMR" id="B2A5T8"/>
<dbReference type="STRING" id="457570.Nther_0435"/>
<dbReference type="KEGG" id="nth:Nther_0435"/>
<dbReference type="eggNOG" id="COG0442">
    <property type="taxonomic scope" value="Bacteria"/>
</dbReference>
<dbReference type="HOGENOM" id="CLU_001882_4_2_9"/>
<dbReference type="InParanoid" id="B2A5T8"/>
<dbReference type="OrthoDB" id="9809052at2"/>
<dbReference type="Proteomes" id="UP000001683">
    <property type="component" value="Chromosome"/>
</dbReference>
<dbReference type="GO" id="GO:0017101">
    <property type="term" value="C:aminoacyl-tRNA synthetase multienzyme complex"/>
    <property type="evidence" value="ECO:0007669"/>
    <property type="project" value="TreeGrafter"/>
</dbReference>
<dbReference type="GO" id="GO:0005737">
    <property type="term" value="C:cytoplasm"/>
    <property type="evidence" value="ECO:0007669"/>
    <property type="project" value="UniProtKB-SubCell"/>
</dbReference>
<dbReference type="GO" id="GO:0005524">
    <property type="term" value="F:ATP binding"/>
    <property type="evidence" value="ECO:0007669"/>
    <property type="project" value="UniProtKB-UniRule"/>
</dbReference>
<dbReference type="GO" id="GO:0140096">
    <property type="term" value="F:catalytic activity, acting on a protein"/>
    <property type="evidence" value="ECO:0007669"/>
    <property type="project" value="UniProtKB-ARBA"/>
</dbReference>
<dbReference type="GO" id="GO:0004827">
    <property type="term" value="F:proline-tRNA ligase activity"/>
    <property type="evidence" value="ECO:0007669"/>
    <property type="project" value="UniProtKB-UniRule"/>
</dbReference>
<dbReference type="GO" id="GO:0016740">
    <property type="term" value="F:transferase activity"/>
    <property type="evidence" value="ECO:0007669"/>
    <property type="project" value="UniProtKB-ARBA"/>
</dbReference>
<dbReference type="GO" id="GO:0006433">
    <property type="term" value="P:prolyl-tRNA aminoacylation"/>
    <property type="evidence" value="ECO:0007669"/>
    <property type="project" value="UniProtKB-UniRule"/>
</dbReference>
<dbReference type="CDD" id="cd00862">
    <property type="entry name" value="ProRS_anticodon_zinc"/>
    <property type="match status" value="1"/>
</dbReference>
<dbReference type="CDD" id="cd00778">
    <property type="entry name" value="ProRS_core_arch_euk"/>
    <property type="match status" value="1"/>
</dbReference>
<dbReference type="FunFam" id="3.40.50.800:FF:000005">
    <property type="entry name" value="bifunctional glutamate/proline--tRNA ligase"/>
    <property type="match status" value="1"/>
</dbReference>
<dbReference type="FunFam" id="3.30.930.10:FF:000023">
    <property type="entry name" value="Proline--tRNA ligase"/>
    <property type="match status" value="1"/>
</dbReference>
<dbReference type="Gene3D" id="3.40.50.800">
    <property type="entry name" value="Anticodon-binding domain"/>
    <property type="match status" value="1"/>
</dbReference>
<dbReference type="Gene3D" id="3.30.930.10">
    <property type="entry name" value="Bira Bifunctional Protein, Domain 2"/>
    <property type="match status" value="1"/>
</dbReference>
<dbReference type="Gene3D" id="3.30.110.30">
    <property type="entry name" value="C-terminal domain of ProRS"/>
    <property type="match status" value="1"/>
</dbReference>
<dbReference type="HAMAP" id="MF_01571">
    <property type="entry name" value="Pro_tRNA_synth_type3"/>
    <property type="match status" value="1"/>
</dbReference>
<dbReference type="InterPro" id="IPR002314">
    <property type="entry name" value="aa-tRNA-synt_IIb"/>
</dbReference>
<dbReference type="InterPro" id="IPR006195">
    <property type="entry name" value="aa-tRNA-synth_II"/>
</dbReference>
<dbReference type="InterPro" id="IPR045864">
    <property type="entry name" value="aa-tRNA-synth_II/BPL/LPL"/>
</dbReference>
<dbReference type="InterPro" id="IPR004154">
    <property type="entry name" value="Anticodon-bd"/>
</dbReference>
<dbReference type="InterPro" id="IPR036621">
    <property type="entry name" value="Anticodon-bd_dom_sf"/>
</dbReference>
<dbReference type="InterPro" id="IPR002316">
    <property type="entry name" value="Pro-tRNA-ligase_IIa"/>
</dbReference>
<dbReference type="InterPro" id="IPR004499">
    <property type="entry name" value="Pro-tRNA-ligase_IIa_arc-type"/>
</dbReference>
<dbReference type="InterPro" id="IPR016061">
    <property type="entry name" value="Pro-tRNA_ligase_II_C"/>
</dbReference>
<dbReference type="InterPro" id="IPR017449">
    <property type="entry name" value="Pro-tRNA_synth_II"/>
</dbReference>
<dbReference type="InterPro" id="IPR033721">
    <property type="entry name" value="ProRS_core_arch_euk"/>
</dbReference>
<dbReference type="NCBIfam" id="TIGR00408">
    <property type="entry name" value="proS_fam_I"/>
    <property type="match status" value="1"/>
</dbReference>
<dbReference type="PANTHER" id="PTHR43382:SF2">
    <property type="entry name" value="BIFUNCTIONAL GLUTAMATE_PROLINE--TRNA LIGASE"/>
    <property type="match status" value="1"/>
</dbReference>
<dbReference type="PANTHER" id="PTHR43382">
    <property type="entry name" value="PROLYL-TRNA SYNTHETASE"/>
    <property type="match status" value="1"/>
</dbReference>
<dbReference type="Pfam" id="PF03129">
    <property type="entry name" value="HGTP_anticodon"/>
    <property type="match status" value="1"/>
</dbReference>
<dbReference type="Pfam" id="PF09180">
    <property type="entry name" value="ProRS-C_1"/>
    <property type="match status" value="1"/>
</dbReference>
<dbReference type="Pfam" id="PF00587">
    <property type="entry name" value="tRNA-synt_2b"/>
    <property type="match status" value="1"/>
</dbReference>
<dbReference type="PRINTS" id="PR01046">
    <property type="entry name" value="TRNASYNTHPRO"/>
</dbReference>
<dbReference type="SMART" id="SM00946">
    <property type="entry name" value="ProRS-C_1"/>
    <property type="match status" value="1"/>
</dbReference>
<dbReference type="SUPFAM" id="SSF64586">
    <property type="entry name" value="C-terminal domain of ProRS"/>
    <property type="match status" value="1"/>
</dbReference>
<dbReference type="SUPFAM" id="SSF52954">
    <property type="entry name" value="Class II aaRS ABD-related"/>
    <property type="match status" value="1"/>
</dbReference>
<dbReference type="SUPFAM" id="SSF55681">
    <property type="entry name" value="Class II aaRS and biotin synthetases"/>
    <property type="match status" value="1"/>
</dbReference>
<dbReference type="PROSITE" id="PS50862">
    <property type="entry name" value="AA_TRNA_LIGASE_II"/>
    <property type="match status" value="1"/>
</dbReference>
<accession>B2A5T8</accession>
<proteinExistence type="inferred from homology"/>
<organism>
    <name type="scientific">Natranaerobius thermophilus (strain ATCC BAA-1301 / DSM 18059 / JW/NM-WN-LF)</name>
    <dbReference type="NCBI Taxonomy" id="457570"/>
    <lineage>
        <taxon>Bacteria</taxon>
        <taxon>Bacillati</taxon>
        <taxon>Bacillota</taxon>
        <taxon>Clostridia</taxon>
        <taxon>Natranaerobiales</taxon>
        <taxon>Natranaerobiaceae</taxon>
        <taxon>Natranaerobius</taxon>
    </lineage>
</organism>
<gene>
    <name evidence="1" type="primary">proS</name>
    <name type="ordered locus">Nther_0435</name>
</gene>
<evidence type="ECO:0000255" key="1">
    <source>
        <dbReference type="HAMAP-Rule" id="MF_01571"/>
    </source>
</evidence>
<name>SYP_NATTJ</name>
<keyword id="KW-0030">Aminoacyl-tRNA synthetase</keyword>
<keyword id="KW-0067">ATP-binding</keyword>
<keyword id="KW-0963">Cytoplasm</keyword>
<keyword id="KW-0436">Ligase</keyword>
<keyword id="KW-0547">Nucleotide-binding</keyword>
<keyword id="KW-0648">Protein biosynthesis</keyword>
<keyword id="KW-1185">Reference proteome</keyword>
<reference key="1">
    <citation type="submission" date="2008-04" db="EMBL/GenBank/DDBJ databases">
        <title>Complete sequence of chromosome of Natranaerobius thermophilus JW/NM-WN-LF.</title>
        <authorList>
            <consortium name="US DOE Joint Genome Institute"/>
            <person name="Copeland A."/>
            <person name="Lucas S."/>
            <person name="Lapidus A."/>
            <person name="Glavina del Rio T."/>
            <person name="Dalin E."/>
            <person name="Tice H."/>
            <person name="Bruce D."/>
            <person name="Goodwin L."/>
            <person name="Pitluck S."/>
            <person name="Chertkov O."/>
            <person name="Brettin T."/>
            <person name="Detter J.C."/>
            <person name="Han C."/>
            <person name="Kuske C.R."/>
            <person name="Schmutz J."/>
            <person name="Larimer F."/>
            <person name="Land M."/>
            <person name="Hauser L."/>
            <person name="Kyrpides N."/>
            <person name="Lykidis A."/>
            <person name="Mesbah N.M."/>
            <person name="Wiegel J."/>
        </authorList>
    </citation>
    <scope>NUCLEOTIDE SEQUENCE [LARGE SCALE GENOMIC DNA]</scope>
    <source>
        <strain>ATCC BAA-1301 / DSM 18059 / JW/NM-WN-LF</strain>
    </source>
</reference>
<comment type="function">
    <text evidence="1">Catalyzes the attachment of proline to tRNA(Pro) in a two-step reaction: proline is first activated by ATP to form Pro-AMP and then transferred to the acceptor end of tRNA(Pro).</text>
</comment>
<comment type="catalytic activity">
    <reaction evidence="1">
        <text>tRNA(Pro) + L-proline + ATP = L-prolyl-tRNA(Pro) + AMP + diphosphate</text>
        <dbReference type="Rhea" id="RHEA:14305"/>
        <dbReference type="Rhea" id="RHEA-COMP:9700"/>
        <dbReference type="Rhea" id="RHEA-COMP:9702"/>
        <dbReference type="ChEBI" id="CHEBI:30616"/>
        <dbReference type="ChEBI" id="CHEBI:33019"/>
        <dbReference type="ChEBI" id="CHEBI:60039"/>
        <dbReference type="ChEBI" id="CHEBI:78442"/>
        <dbReference type="ChEBI" id="CHEBI:78532"/>
        <dbReference type="ChEBI" id="CHEBI:456215"/>
        <dbReference type="EC" id="6.1.1.15"/>
    </reaction>
</comment>
<comment type="subunit">
    <text evidence="1">Homodimer.</text>
</comment>
<comment type="subcellular location">
    <subcellularLocation>
        <location evidence="1">Cytoplasm</location>
    </subcellularLocation>
</comment>
<comment type="domain">
    <text evidence="1">Consists of three domains: the N-terminal catalytic domain, the anticodon-binding domain and the C-terminal extension.</text>
</comment>
<comment type="similarity">
    <text evidence="1">Belongs to the class-II aminoacyl-tRNA synthetase family. ProS type 3 subfamily.</text>
</comment>
<feature type="chain" id="PRO_1000215568" description="Proline--tRNA ligase">
    <location>
        <begin position="1"/>
        <end position="483"/>
    </location>
</feature>
<sequence>MSKNNEEFVKEITPQSEDYSQWYLDVIKKTKLVDYAPVKGCMVIRPYGYAIWEKMKEGLDRRIKETGHENAYFPLFIPESLLQKEADHVEGFAPEVAWITKGGDEELSESLAVRPTSEAMFGEMYSDWIQSWRDLPVLINQWANVVRWEKSTKPFLRTSEFLWQEGHTAHRTEEDAEEEALQMLDVYKDFVENDMAIPVLNGLKSEKEKFAGALRTFCIEALMSDGRALQAGTSHNLGQHFAKVFDITFLDQDDERKYVWQTSWGVSTRLIGALIMVHGDNRGLKIPPKVAPHQLVMVPITPKKQREQVLEESDKLYQELKDKFRVKLDNREEHTPGWKFNEWEMKGVPIRLEIGPKDIEKDQVVLVRRDTDEKMFVKRDELIDKLEELIEDIQNKMLQTAKNFLEENTHTASSLDELGQILEQKRGMIKAYWCGNQACEEKVKDDTKATIRVIPFEAETGGSCIACGYHNDDNKEVFFARAY</sequence>